<gene>
    <name evidence="1" type="primary">tgt</name>
    <name type="ordered locus">CPF_2201</name>
</gene>
<evidence type="ECO:0000255" key="1">
    <source>
        <dbReference type="HAMAP-Rule" id="MF_00168"/>
    </source>
</evidence>
<proteinExistence type="inferred from homology"/>
<comment type="function">
    <text evidence="1">Catalyzes the base-exchange of a guanine (G) residue with the queuine precursor 7-aminomethyl-7-deazaguanine (PreQ1) at position 34 (anticodon wobble position) in tRNAs with GU(N) anticodons (tRNA-Asp, -Asn, -His and -Tyr). Catalysis occurs through a double-displacement mechanism. The nucleophile active site attacks the C1' of nucleotide 34 to detach the guanine base from the RNA, forming a covalent enzyme-RNA intermediate. The proton acceptor active site deprotonates the incoming PreQ1, allowing a nucleophilic attack on the C1' of the ribose to form the product. After dissociation, two additional enzymatic reactions on the tRNA convert PreQ1 to queuine (Q), resulting in the hypermodified nucleoside queuosine (7-(((4,5-cis-dihydroxy-2-cyclopenten-1-yl)amino)methyl)-7-deazaguanosine).</text>
</comment>
<comment type="catalytic activity">
    <reaction evidence="1">
        <text>7-aminomethyl-7-carbaguanine + guanosine(34) in tRNA = 7-aminomethyl-7-carbaguanosine(34) in tRNA + guanine</text>
        <dbReference type="Rhea" id="RHEA:24104"/>
        <dbReference type="Rhea" id="RHEA-COMP:10341"/>
        <dbReference type="Rhea" id="RHEA-COMP:10342"/>
        <dbReference type="ChEBI" id="CHEBI:16235"/>
        <dbReference type="ChEBI" id="CHEBI:58703"/>
        <dbReference type="ChEBI" id="CHEBI:74269"/>
        <dbReference type="ChEBI" id="CHEBI:82833"/>
        <dbReference type="EC" id="2.4.2.29"/>
    </reaction>
</comment>
<comment type="cofactor">
    <cofactor evidence="1">
        <name>Zn(2+)</name>
        <dbReference type="ChEBI" id="CHEBI:29105"/>
    </cofactor>
    <text evidence="1">Binds 1 zinc ion per subunit.</text>
</comment>
<comment type="pathway">
    <text evidence="1">tRNA modification; tRNA-queuosine biosynthesis.</text>
</comment>
<comment type="subunit">
    <text evidence="1">Homodimer. Within each dimer, one monomer is responsible for RNA recognition and catalysis, while the other monomer binds to the replacement base PreQ1.</text>
</comment>
<comment type="similarity">
    <text evidence="1">Belongs to the queuine tRNA-ribosyltransferase family.</text>
</comment>
<dbReference type="EC" id="2.4.2.29" evidence="1"/>
<dbReference type="EMBL" id="CP000246">
    <property type="protein sequence ID" value="ABG82825.1"/>
    <property type="molecule type" value="Genomic_DNA"/>
</dbReference>
<dbReference type="RefSeq" id="WP_003451459.1">
    <property type="nucleotide sequence ID" value="NC_008261.1"/>
</dbReference>
<dbReference type="SMR" id="Q0TP15"/>
<dbReference type="STRING" id="195103.CPF_2201"/>
<dbReference type="PaxDb" id="195103-CPF_2201"/>
<dbReference type="GeneID" id="93001518"/>
<dbReference type="KEGG" id="cpf:CPF_2201"/>
<dbReference type="eggNOG" id="COG0343">
    <property type="taxonomic scope" value="Bacteria"/>
</dbReference>
<dbReference type="HOGENOM" id="CLU_022060_0_1_9"/>
<dbReference type="UniPathway" id="UPA00392"/>
<dbReference type="Proteomes" id="UP000001823">
    <property type="component" value="Chromosome"/>
</dbReference>
<dbReference type="GO" id="GO:0005829">
    <property type="term" value="C:cytosol"/>
    <property type="evidence" value="ECO:0007669"/>
    <property type="project" value="TreeGrafter"/>
</dbReference>
<dbReference type="GO" id="GO:0046872">
    <property type="term" value="F:metal ion binding"/>
    <property type="evidence" value="ECO:0007669"/>
    <property type="project" value="UniProtKB-KW"/>
</dbReference>
<dbReference type="GO" id="GO:0008479">
    <property type="term" value="F:tRNA-guanosine(34) queuine transglycosylase activity"/>
    <property type="evidence" value="ECO:0007669"/>
    <property type="project" value="UniProtKB-UniRule"/>
</dbReference>
<dbReference type="GO" id="GO:0008616">
    <property type="term" value="P:queuosine biosynthetic process"/>
    <property type="evidence" value="ECO:0007669"/>
    <property type="project" value="UniProtKB-UniRule"/>
</dbReference>
<dbReference type="GO" id="GO:0002099">
    <property type="term" value="P:tRNA wobble guanine modification"/>
    <property type="evidence" value="ECO:0007669"/>
    <property type="project" value="TreeGrafter"/>
</dbReference>
<dbReference type="GO" id="GO:0101030">
    <property type="term" value="P:tRNA-guanine transglycosylation"/>
    <property type="evidence" value="ECO:0007669"/>
    <property type="project" value="InterPro"/>
</dbReference>
<dbReference type="FunFam" id="3.20.20.105:FF:000001">
    <property type="entry name" value="Queuine tRNA-ribosyltransferase"/>
    <property type="match status" value="1"/>
</dbReference>
<dbReference type="Gene3D" id="3.20.20.105">
    <property type="entry name" value="Queuine tRNA-ribosyltransferase-like"/>
    <property type="match status" value="1"/>
</dbReference>
<dbReference type="HAMAP" id="MF_00168">
    <property type="entry name" value="Q_tRNA_Tgt"/>
    <property type="match status" value="1"/>
</dbReference>
<dbReference type="InterPro" id="IPR050076">
    <property type="entry name" value="ArchSynthase1/Queuine_TRR"/>
</dbReference>
<dbReference type="InterPro" id="IPR004803">
    <property type="entry name" value="TGT"/>
</dbReference>
<dbReference type="InterPro" id="IPR036511">
    <property type="entry name" value="TGT-like_sf"/>
</dbReference>
<dbReference type="InterPro" id="IPR002616">
    <property type="entry name" value="tRNA_ribo_trans-like"/>
</dbReference>
<dbReference type="NCBIfam" id="TIGR00430">
    <property type="entry name" value="Q_tRNA_tgt"/>
    <property type="match status" value="1"/>
</dbReference>
<dbReference type="NCBIfam" id="TIGR00449">
    <property type="entry name" value="tgt_general"/>
    <property type="match status" value="1"/>
</dbReference>
<dbReference type="PANTHER" id="PTHR46499">
    <property type="entry name" value="QUEUINE TRNA-RIBOSYLTRANSFERASE"/>
    <property type="match status" value="1"/>
</dbReference>
<dbReference type="PANTHER" id="PTHR46499:SF1">
    <property type="entry name" value="QUEUINE TRNA-RIBOSYLTRANSFERASE"/>
    <property type="match status" value="1"/>
</dbReference>
<dbReference type="Pfam" id="PF01702">
    <property type="entry name" value="TGT"/>
    <property type="match status" value="1"/>
</dbReference>
<dbReference type="SUPFAM" id="SSF51713">
    <property type="entry name" value="tRNA-guanine transglycosylase"/>
    <property type="match status" value="1"/>
</dbReference>
<accession>Q0TP15</accession>
<organism>
    <name type="scientific">Clostridium perfringens (strain ATCC 13124 / DSM 756 / JCM 1290 / NCIMB 6125 / NCTC 8237 / Type A)</name>
    <dbReference type="NCBI Taxonomy" id="195103"/>
    <lineage>
        <taxon>Bacteria</taxon>
        <taxon>Bacillati</taxon>
        <taxon>Bacillota</taxon>
        <taxon>Clostridia</taxon>
        <taxon>Eubacteriales</taxon>
        <taxon>Clostridiaceae</taxon>
        <taxon>Clostridium</taxon>
    </lineage>
</organism>
<sequence>MTKKRYTLLKKDGKARRGEFVTPHGTIQTPVFMNVGTLAAIKGAVSSMDLKEIGCQVELSNTYHLHLRPGDKIVKQMGGLHNFMNWDRPILTDSGGFQVFSLAGMRKIKEEGVYFNSHIDGRKIFMGPEESMQIQSNLGSTIAMAFDECIPNPSTREYVEKSVARTTRWLERCKKEMDRLNSLDDTVNKEQMLFGINQGGVYEDIRIEHAKTIREMDLDGYAIGGLAVGETHEEMYRVIDAVVPHLPEDKPIYLMGVGLPSNILEAVERGVDFFDCVLPARNGRHGHVFTKEGKINLMNAKFELDARPIDEGCQCPACKNYTRAYIRHLFKAKEMLAMRLCVLHNLYFYNKLMEDIRDAIDGGYFAEFKAKKLEEWNGRA</sequence>
<protein>
    <recommendedName>
        <fullName evidence="1">Queuine tRNA-ribosyltransferase</fullName>
        <ecNumber evidence="1">2.4.2.29</ecNumber>
    </recommendedName>
    <alternativeName>
        <fullName evidence="1">Guanine insertion enzyme</fullName>
    </alternativeName>
    <alternativeName>
        <fullName evidence="1">tRNA-guanine transglycosylase</fullName>
    </alternativeName>
</protein>
<reference key="1">
    <citation type="journal article" date="2006" name="Genome Res.">
        <title>Skewed genomic variability in strains of the toxigenic bacterial pathogen, Clostridium perfringens.</title>
        <authorList>
            <person name="Myers G.S.A."/>
            <person name="Rasko D.A."/>
            <person name="Cheung J.K."/>
            <person name="Ravel J."/>
            <person name="Seshadri R."/>
            <person name="DeBoy R.T."/>
            <person name="Ren Q."/>
            <person name="Varga J."/>
            <person name="Awad M.M."/>
            <person name="Brinkac L.M."/>
            <person name="Daugherty S.C."/>
            <person name="Haft D.H."/>
            <person name="Dodson R.J."/>
            <person name="Madupu R."/>
            <person name="Nelson W.C."/>
            <person name="Rosovitz M.J."/>
            <person name="Sullivan S.A."/>
            <person name="Khouri H."/>
            <person name="Dimitrov G.I."/>
            <person name="Watkins K.L."/>
            <person name="Mulligan S."/>
            <person name="Benton J."/>
            <person name="Radune D."/>
            <person name="Fisher D.J."/>
            <person name="Atkins H.S."/>
            <person name="Hiscox T."/>
            <person name="Jost B.H."/>
            <person name="Billington S.J."/>
            <person name="Songer J.G."/>
            <person name="McClane B.A."/>
            <person name="Titball R.W."/>
            <person name="Rood J.I."/>
            <person name="Melville S.B."/>
            <person name="Paulsen I.T."/>
        </authorList>
    </citation>
    <scope>NUCLEOTIDE SEQUENCE [LARGE SCALE GENOMIC DNA]</scope>
    <source>
        <strain>ATCC 13124 / DSM 756 / JCM 1290 / NCIMB 6125 / NCTC 8237 / S 107 / Type A</strain>
    </source>
</reference>
<keyword id="KW-0328">Glycosyltransferase</keyword>
<keyword id="KW-0479">Metal-binding</keyword>
<keyword id="KW-0671">Queuosine biosynthesis</keyword>
<keyword id="KW-0808">Transferase</keyword>
<keyword id="KW-0819">tRNA processing</keyword>
<keyword id="KW-0862">Zinc</keyword>
<feature type="chain" id="PRO_1000016782" description="Queuine tRNA-ribosyltransferase">
    <location>
        <begin position="1"/>
        <end position="380"/>
    </location>
</feature>
<feature type="region of interest" description="RNA binding" evidence="1">
    <location>
        <begin position="256"/>
        <end position="262"/>
    </location>
</feature>
<feature type="region of interest" description="RNA binding; important for wobble base 34 recognition" evidence="1">
    <location>
        <begin position="280"/>
        <end position="284"/>
    </location>
</feature>
<feature type="active site" description="Proton acceptor" evidence="1">
    <location>
        <position position="93"/>
    </location>
</feature>
<feature type="active site" description="Nucleophile" evidence="1">
    <location>
        <position position="275"/>
    </location>
</feature>
<feature type="binding site" evidence="1">
    <location>
        <begin position="93"/>
        <end position="97"/>
    </location>
    <ligand>
        <name>substrate</name>
    </ligand>
</feature>
<feature type="binding site" evidence="1">
    <location>
        <position position="147"/>
    </location>
    <ligand>
        <name>substrate</name>
    </ligand>
</feature>
<feature type="binding site" evidence="1">
    <location>
        <position position="198"/>
    </location>
    <ligand>
        <name>substrate</name>
    </ligand>
</feature>
<feature type="binding site" evidence="1">
    <location>
        <position position="225"/>
    </location>
    <ligand>
        <name>substrate</name>
    </ligand>
</feature>
<feature type="binding site" evidence="1">
    <location>
        <position position="313"/>
    </location>
    <ligand>
        <name>Zn(2+)</name>
        <dbReference type="ChEBI" id="CHEBI:29105"/>
    </ligand>
</feature>
<feature type="binding site" evidence="1">
    <location>
        <position position="315"/>
    </location>
    <ligand>
        <name>Zn(2+)</name>
        <dbReference type="ChEBI" id="CHEBI:29105"/>
    </ligand>
</feature>
<feature type="binding site" evidence="1">
    <location>
        <position position="318"/>
    </location>
    <ligand>
        <name>Zn(2+)</name>
        <dbReference type="ChEBI" id="CHEBI:29105"/>
    </ligand>
</feature>
<feature type="binding site" evidence="1">
    <location>
        <position position="344"/>
    </location>
    <ligand>
        <name>Zn(2+)</name>
        <dbReference type="ChEBI" id="CHEBI:29105"/>
    </ligand>
</feature>
<name>TGT_CLOP1</name>